<keyword id="KW-0067">ATP-binding</keyword>
<keyword id="KW-0315">Glutamine amidotransferase</keyword>
<keyword id="KW-0436">Ligase</keyword>
<keyword id="KW-0460">Magnesium</keyword>
<keyword id="KW-0479">Metal-binding</keyword>
<keyword id="KW-0547">Nucleotide-binding</keyword>
<keyword id="KW-0665">Pyrimidine biosynthesis</keyword>
<keyword id="KW-1185">Reference proteome</keyword>
<dbReference type="EC" id="6.3.4.2" evidence="1"/>
<dbReference type="EMBL" id="U88301">
    <property type="protein sequence ID" value="AAB48045.1"/>
    <property type="molecule type" value="Genomic_DNA"/>
</dbReference>
<dbReference type="EMBL" id="LT708304">
    <property type="protein sequence ID" value="SIU00329.1"/>
    <property type="molecule type" value="Genomic_DNA"/>
</dbReference>
<dbReference type="RefSeq" id="NP_855378.1">
    <property type="nucleotide sequence ID" value="NC_002945.3"/>
</dbReference>
<dbReference type="RefSeq" id="WP_003408396.1">
    <property type="nucleotide sequence ID" value="NC_002945.4"/>
</dbReference>
<dbReference type="SMR" id="P0A5U3"/>
<dbReference type="KEGG" id="mbo:BQ2027_MB1725"/>
<dbReference type="PATRIC" id="fig|233413.5.peg.1881"/>
<dbReference type="UniPathway" id="UPA00159">
    <property type="reaction ID" value="UER00277"/>
</dbReference>
<dbReference type="Proteomes" id="UP000001419">
    <property type="component" value="Chromosome"/>
</dbReference>
<dbReference type="GO" id="GO:0005829">
    <property type="term" value="C:cytosol"/>
    <property type="evidence" value="ECO:0007669"/>
    <property type="project" value="TreeGrafter"/>
</dbReference>
<dbReference type="GO" id="GO:0005524">
    <property type="term" value="F:ATP binding"/>
    <property type="evidence" value="ECO:0007669"/>
    <property type="project" value="UniProtKB-KW"/>
</dbReference>
<dbReference type="GO" id="GO:0003883">
    <property type="term" value="F:CTP synthase activity"/>
    <property type="evidence" value="ECO:0007669"/>
    <property type="project" value="UniProtKB-UniRule"/>
</dbReference>
<dbReference type="GO" id="GO:0004359">
    <property type="term" value="F:glutaminase activity"/>
    <property type="evidence" value="ECO:0007669"/>
    <property type="project" value="RHEA"/>
</dbReference>
<dbReference type="GO" id="GO:0042802">
    <property type="term" value="F:identical protein binding"/>
    <property type="evidence" value="ECO:0007669"/>
    <property type="project" value="TreeGrafter"/>
</dbReference>
<dbReference type="GO" id="GO:0046872">
    <property type="term" value="F:metal ion binding"/>
    <property type="evidence" value="ECO:0007669"/>
    <property type="project" value="UniProtKB-KW"/>
</dbReference>
<dbReference type="GO" id="GO:0044210">
    <property type="term" value="P:'de novo' CTP biosynthetic process"/>
    <property type="evidence" value="ECO:0007669"/>
    <property type="project" value="UniProtKB-UniRule"/>
</dbReference>
<dbReference type="GO" id="GO:0019856">
    <property type="term" value="P:pyrimidine nucleobase biosynthetic process"/>
    <property type="evidence" value="ECO:0007669"/>
    <property type="project" value="TreeGrafter"/>
</dbReference>
<dbReference type="CDD" id="cd03113">
    <property type="entry name" value="CTPS_N"/>
    <property type="match status" value="1"/>
</dbReference>
<dbReference type="CDD" id="cd01746">
    <property type="entry name" value="GATase1_CTP_Synthase"/>
    <property type="match status" value="1"/>
</dbReference>
<dbReference type="FunFam" id="3.40.50.300:FF:000009">
    <property type="entry name" value="CTP synthase"/>
    <property type="match status" value="1"/>
</dbReference>
<dbReference type="FunFam" id="3.40.50.880:FF:000002">
    <property type="entry name" value="CTP synthase"/>
    <property type="match status" value="1"/>
</dbReference>
<dbReference type="Gene3D" id="3.40.50.880">
    <property type="match status" value="1"/>
</dbReference>
<dbReference type="Gene3D" id="3.40.50.300">
    <property type="entry name" value="P-loop containing nucleotide triphosphate hydrolases"/>
    <property type="match status" value="1"/>
</dbReference>
<dbReference type="HAMAP" id="MF_01227">
    <property type="entry name" value="PyrG"/>
    <property type="match status" value="1"/>
</dbReference>
<dbReference type="InterPro" id="IPR029062">
    <property type="entry name" value="Class_I_gatase-like"/>
</dbReference>
<dbReference type="InterPro" id="IPR004468">
    <property type="entry name" value="CTP_synthase"/>
</dbReference>
<dbReference type="InterPro" id="IPR017456">
    <property type="entry name" value="CTP_synthase_N"/>
</dbReference>
<dbReference type="InterPro" id="IPR017926">
    <property type="entry name" value="GATASE"/>
</dbReference>
<dbReference type="InterPro" id="IPR033828">
    <property type="entry name" value="GATase1_CTP_Synthase"/>
</dbReference>
<dbReference type="InterPro" id="IPR027417">
    <property type="entry name" value="P-loop_NTPase"/>
</dbReference>
<dbReference type="NCBIfam" id="NF003792">
    <property type="entry name" value="PRK05380.1"/>
    <property type="match status" value="1"/>
</dbReference>
<dbReference type="NCBIfam" id="TIGR00337">
    <property type="entry name" value="PyrG"/>
    <property type="match status" value="1"/>
</dbReference>
<dbReference type="PANTHER" id="PTHR11550">
    <property type="entry name" value="CTP SYNTHASE"/>
    <property type="match status" value="1"/>
</dbReference>
<dbReference type="PANTHER" id="PTHR11550:SF0">
    <property type="entry name" value="CTP SYNTHASE-RELATED"/>
    <property type="match status" value="1"/>
</dbReference>
<dbReference type="Pfam" id="PF06418">
    <property type="entry name" value="CTP_synth_N"/>
    <property type="match status" value="1"/>
</dbReference>
<dbReference type="Pfam" id="PF00117">
    <property type="entry name" value="GATase"/>
    <property type="match status" value="1"/>
</dbReference>
<dbReference type="SUPFAM" id="SSF52317">
    <property type="entry name" value="Class I glutamine amidotransferase-like"/>
    <property type="match status" value="1"/>
</dbReference>
<dbReference type="SUPFAM" id="SSF52540">
    <property type="entry name" value="P-loop containing nucleoside triphosphate hydrolases"/>
    <property type="match status" value="1"/>
</dbReference>
<dbReference type="PROSITE" id="PS51273">
    <property type="entry name" value="GATASE_TYPE_1"/>
    <property type="match status" value="1"/>
</dbReference>
<reference key="1">
    <citation type="journal article" date="1997" name="Biochem. Mol. Biol. Int.">
        <title>Cloning and sequencing of the pyrG encoding cytidine 5'-triphosphate synthetase from Mycobacterium bovis BCG.</title>
        <authorList>
            <person name="Kim J.H."/>
            <person name="Kim J.K."/>
            <person name="Choe Y.K."/>
        </authorList>
    </citation>
    <scope>NUCLEOTIDE SEQUENCE [GENOMIC DNA]</scope>
    <source>
        <strain>BCG</strain>
    </source>
</reference>
<reference key="2">
    <citation type="journal article" date="2003" name="Proc. Natl. Acad. Sci. U.S.A.">
        <title>The complete genome sequence of Mycobacterium bovis.</title>
        <authorList>
            <person name="Garnier T."/>
            <person name="Eiglmeier K."/>
            <person name="Camus J.-C."/>
            <person name="Medina N."/>
            <person name="Mansoor H."/>
            <person name="Pryor M."/>
            <person name="Duthoy S."/>
            <person name="Grondin S."/>
            <person name="Lacroix C."/>
            <person name="Monsempe C."/>
            <person name="Simon S."/>
            <person name="Harris B."/>
            <person name="Atkin R."/>
            <person name="Doggett J."/>
            <person name="Mayes R."/>
            <person name="Keating L."/>
            <person name="Wheeler P.R."/>
            <person name="Parkhill J."/>
            <person name="Barrell B.G."/>
            <person name="Cole S.T."/>
            <person name="Gordon S.V."/>
            <person name="Hewinson R.G."/>
        </authorList>
    </citation>
    <scope>NUCLEOTIDE SEQUENCE [LARGE SCALE GENOMIC DNA]</scope>
    <source>
        <strain>ATCC BAA-935 / AF2122/97</strain>
    </source>
</reference>
<reference key="3">
    <citation type="journal article" date="2017" name="Genome Announc.">
        <title>Updated reference genome sequence and annotation of Mycobacterium bovis AF2122/97.</title>
        <authorList>
            <person name="Malone K.M."/>
            <person name="Farrell D."/>
            <person name="Stuber T.P."/>
            <person name="Schubert O.T."/>
            <person name="Aebersold R."/>
            <person name="Robbe-Austerman S."/>
            <person name="Gordon S.V."/>
        </authorList>
    </citation>
    <scope>NUCLEOTIDE SEQUENCE [LARGE SCALE GENOMIC DNA]</scope>
    <scope>GENOME REANNOTATION</scope>
    <source>
        <strain>ATCC BAA-935 / AF2122/97</strain>
    </source>
</reference>
<sequence length="586" mass="63635">MRKHPQTATKHLFVSGGVASSLGKGLTASSLGQLLTARGLHVTMQKLDPYLNVDPGTMNPFQHGEVFVTEDGAETDLDVGHYERFLDRNLPGSANVTTGQVYSTVIAKERRGEYLGDTVQVIPHITDEIKRRILAMAQPDADGNRPDVVITEIGGTVGDIESQPFLEAARQVRHYLGREDVFFLHVSLVPYLAPSGELKTKPTQHSVAALRSIGITPDALILRCDRDVPEALKNKIALMCDVDIDGVISTPDAPSIYDIPKVLHREELDAFVVRRLNLPFRDVDWTEWDDLLRRVHEPHETVRIALVGKYVELSDAYLSVAEALRAGGFKHRAKVEICWVASDGCETTSGAAAALGDVHGVLIPGGFGIRGIEGKIGAIAYARARGLPVLGLCLGLQCIVIEAARSVGLTNANSAEFDPDTPDPVIATMPDQEEIVAGEADLGGTMRLGSYPAVLEPDSVVAQAYQTTQVSERHRHRYEVNNAYRDKIAESGLRFSGTSPDGHLVEFVEYPPDRHPFVVGTQAHPELKSRPTRPHPLFVAFVGAAIDYKAGELLPVEIPEIPEHTPNGSSHRDGVGQPLPEPASRG</sequence>
<comment type="function">
    <text evidence="1">Catalyzes the ATP-dependent amination of UTP to CTP with either L-glutamine or ammonia as the source of nitrogen. Regulates intracellular CTP levels through interactions with the four ribonucleotide triphosphates.</text>
</comment>
<comment type="catalytic activity">
    <reaction evidence="1">
        <text>UTP + L-glutamine + ATP + H2O = CTP + L-glutamate + ADP + phosphate + 2 H(+)</text>
        <dbReference type="Rhea" id="RHEA:26426"/>
        <dbReference type="ChEBI" id="CHEBI:15377"/>
        <dbReference type="ChEBI" id="CHEBI:15378"/>
        <dbReference type="ChEBI" id="CHEBI:29985"/>
        <dbReference type="ChEBI" id="CHEBI:30616"/>
        <dbReference type="ChEBI" id="CHEBI:37563"/>
        <dbReference type="ChEBI" id="CHEBI:43474"/>
        <dbReference type="ChEBI" id="CHEBI:46398"/>
        <dbReference type="ChEBI" id="CHEBI:58359"/>
        <dbReference type="ChEBI" id="CHEBI:456216"/>
        <dbReference type="EC" id="6.3.4.2"/>
    </reaction>
</comment>
<comment type="catalytic activity">
    <reaction evidence="1">
        <text>L-glutamine + H2O = L-glutamate + NH4(+)</text>
        <dbReference type="Rhea" id="RHEA:15889"/>
        <dbReference type="ChEBI" id="CHEBI:15377"/>
        <dbReference type="ChEBI" id="CHEBI:28938"/>
        <dbReference type="ChEBI" id="CHEBI:29985"/>
        <dbReference type="ChEBI" id="CHEBI:58359"/>
    </reaction>
</comment>
<comment type="catalytic activity">
    <reaction evidence="1">
        <text>UTP + NH4(+) + ATP = CTP + ADP + phosphate + 2 H(+)</text>
        <dbReference type="Rhea" id="RHEA:16597"/>
        <dbReference type="ChEBI" id="CHEBI:15378"/>
        <dbReference type="ChEBI" id="CHEBI:28938"/>
        <dbReference type="ChEBI" id="CHEBI:30616"/>
        <dbReference type="ChEBI" id="CHEBI:37563"/>
        <dbReference type="ChEBI" id="CHEBI:43474"/>
        <dbReference type="ChEBI" id="CHEBI:46398"/>
        <dbReference type="ChEBI" id="CHEBI:456216"/>
    </reaction>
</comment>
<comment type="activity regulation">
    <text evidence="1">Allosterically activated by GTP, when glutamine is the substrate; GTP has no effect on the reaction when ammonia is the substrate. The allosteric effector GTP functions by stabilizing the protein conformation that binds the tetrahedral intermediate(s) formed during glutamine hydrolysis. Inhibited by the product CTP, via allosteric rather than competitive inhibition.</text>
</comment>
<comment type="pathway">
    <text evidence="1">Pyrimidine metabolism; CTP biosynthesis via de novo pathway; CTP from UDP: step 2/2.</text>
</comment>
<comment type="subunit">
    <text evidence="1">Homotetramer.</text>
</comment>
<comment type="miscellaneous">
    <text evidence="1">CTPSs have evolved a hybrid strategy for distinguishing between UTP and CTP. The overlapping regions of the product feedback inhibitory and substrate sites recognize a common feature in both compounds, the triphosphate moiety. To differentiate isosteric substrate and product pyrimidine rings, an additional pocket far from the expected kinase/ligase catalytic site, specifically recognizes the cytosine and ribose portions of the product inhibitor.</text>
</comment>
<comment type="similarity">
    <text evidence="1">Belongs to the CTP synthase family.</text>
</comment>
<feature type="chain" id="PRO_0000138203" description="CTP synthase">
    <location>
        <begin position="1"/>
        <end position="586"/>
    </location>
</feature>
<feature type="domain" description="Glutamine amidotransferase type-1" evidence="1">
    <location>
        <begin position="303"/>
        <end position="551"/>
    </location>
</feature>
<feature type="region of interest" description="Amidoligase domain" evidence="1">
    <location>
        <begin position="1"/>
        <end position="278"/>
    </location>
</feature>
<feature type="region of interest" description="Disordered" evidence="2">
    <location>
        <begin position="560"/>
        <end position="586"/>
    </location>
</feature>
<feature type="active site" description="Nucleophile; for glutamine hydrolysis" evidence="1">
    <location>
        <position position="393"/>
    </location>
</feature>
<feature type="active site" evidence="1">
    <location>
        <position position="524"/>
    </location>
</feature>
<feature type="active site" evidence="1">
    <location>
        <position position="526"/>
    </location>
</feature>
<feature type="binding site" evidence="1">
    <location>
        <position position="20"/>
    </location>
    <ligand>
        <name>CTP</name>
        <dbReference type="ChEBI" id="CHEBI:37563"/>
        <note>allosteric inhibitor</note>
    </ligand>
</feature>
<feature type="binding site" evidence="1">
    <location>
        <position position="20"/>
    </location>
    <ligand>
        <name>UTP</name>
        <dbReference type="ChEBI" id="CHEBI:46398"/>
    </ligand>
</feature>
<feature type="binding site" evidence="1">
    <location>
        <begin position="21"/>
        <end position="26"/>
    </location>
    <ligand>
        <name>ATP</name>
        <dbReference type="ChEBI" id="CHEBI:30616"/>
    </ligand>
</feature>
<feature type="binding site" evidence="1">
    <location>
        <position position="78"/>
    </location>
    <ligand>
        <name>ATP</name>
        <dbReference type="ChEBI" id="CHEBI:30616"/>
    </ligand>
</feature>
<feature type="binding site" evidence="1">
    <location>
        <position position="78"/>
    </location>
    <ligand>
        <name>Mg(2+)</name>
        <dbReference type="ChEBI" id="CHEBI:18420"/>
    </ligand>
</feature>
<feature type="binding site" evidence="1">
    <location>
        <position position="152"/>
    </location>
    <ligand>
        <name>Mg(2+)</name>
        <dbReference type="ChEBI" id="CHEBI:18420"/>
    </ligand>
</feature>
<feature type="binding site" evidence="1">
    <location>
        <begin position="159"/>
        <end position="161"/>
    </location>
    <ligand>
        <name>CTP</name>
        <dbReference type="ChEBI" id="CHEBI:37563"/>
        <note>allosteric inhibitor</note>
    </ligand>
</feature>
<feature type="binding site" evidence="1">
    <location>
        <begin position="199"/>
        <end position="204"/>
    </location>
    <ligand>
        <name>CTP</name>
        <dbReference type="ChEBI" id="CHEBI:37563"/>
        <note>allosteric inhibitor</note>
    </ligand>
</feature>
<feature type="binding site" evidence="1">
    <location>
        <begin position="199"/>
        <end position="204"/>
    </location>
    <ligand>
        <name>UTP</name>
        <dbReference type="ChEBI" id="CHEBI:46398"/>
    </ligand>
</feature>
<feature type="binding site" evidence="1">
    <location>
        <position position="235"/>
    </location>
    <ligand>
        <name>CTP</name>
        <dbReference type="ChEBI" id="CHEBI:37563"/>
        <note>allosteric inhibitor</note>
    </ligand>
</feature>
<feature type="binding site" evidence="1">
    <location>
        <position position="235"/>
    </location>
    <ligand>
        <name>UTP</name>
        <dbReference type="ChEBI" id="CHEBI:46398"/>
    </ligand>
</feature>
<feature type="binding site" evidence="1">
    <location>
        <position position="366"/>
    </location>
    <ligand>
        <name>L-glutamine</name>
        <dbReference type="ChEBI" id="CHEBI:58359"/>
    </ligand>
</feature>
<feature type="binding site" evidence="1">
    <location>
        <begin position="394"/>
        <end position="397"/>
    </location>
    <ligand>
        <name>L-glutamine</name>
        <dbReference type="ChEBI" id="CHEBI:58359"/>
    </ligand>
</feature>
<feature type="binding site" evidence="1">
    <location>
        <position position="416"/>
    </location>
    <ligand>
        <name>L-glutamine</name>
        <dbReference type="ChEBI" id="CHEBI:58359"/>
    </ligand>
</feature>
<feature type="binding site" evidence="1">
    <location>
        <position position="477"/>
    </location>
    <ligand>
        <name>L-glutamine</name>
        <dbReference type="ChEBI" id="CHEBI:58359"/>
    </ligand>
</feature>
<gene>
    <name evidence="1" type="primary">pyrG</name>
    <name type="ordered locus">BQ2027_MB1725</name>
</gene>
<organism>
    <name type="scientific">Mycobacterium bovis (strain ATCC BAA-935 / AF2122/97)</name>
    <dbReference type="NCBI Taxonomy" id="233413"/>
    <lineage>
        <taxon>Bacteria</taxon>
        <taxon>Bacillati</taxon>
        <taxon>Actinomycetota</taxon>
        <taxon>Actinomycetes</taxon>
        <taxon>Mycobacteriales</taxon>
        <taxon>Mycobacteriaceae</taxon>
        <taxon>Mycobacterium</taxon>
        <taxon>Mycobacterium tuberculosis complex</taxon>
    </lineage>
</organism>
<accession>P0A5U3</accession>
<accession>A0A1R3XZ28</accession>
<accession>P96351</accession>
<accession>X2BIJ7</accession>
<evidence type="ECO:0000255" key="1">
    <source>
        <dbReference type="HAMAP-Rule" id="MF_01227"/>
    </source>
</evidence>
<evidence type="ECO:0000256" key="2">
    <source>
        <dbReference type="SAM" id="MobiDB-lite"/>
    </source>
</evidence>
<name>PYRG_MYCBO</name>
<proteinExistence type="inferred from homology"/>
<protein>
    <recommendedName>
        <fullName evidence="1">CTP synthase</fullName>
        <ecNumber evidence="1">6.3.4.2</ecNumber>
    </recommendedName>
    <alternativeName>
        <fullName evidence="1">Cytidine 5'-triphosphate synthase</fullName>
    </alternativeName>
    <alternativeName>
        <fullName evidence="1">Cytidine triphosphate synthetase</fullName>
        <shortName evidence="1">CTP synthetase</shortName>
        <shortName evidence="1">CTPS</shortName>
    </alternativeName>
    <alternativeName>
        <fullName evidence="1">UTP--ammonia ligase</fullName>
    </alternativeName>
</protein>